<gene>
    <name type="primary">CEP290</name>
    <name type="synonym">NPHP6</name>
</gene>
<comment type="function">
    <text evidence="2 3">Involved in early and late steps in cilia formation. Its association with CCP110 is required for inhibition of primary cilia formation by CCP110. May play a role in early ciliogenesis in the disappearance of centriolar satellites and in the transition of primary ciliar vesicles (PCVs) to capped ciliary vesicles (CCVs). Required for the centrosomal recruitment of RAB8A and for the targeting of centriole satellite proteins to centrosomes such as of PCM1. Required for the correct localization of ciliary and phototransduction proteins in retinal photoreceptor cells; may play a role in ciliary transport processes. Required for efficient recruitment of RAB8A to primary cilium. In the ciliary transition zone is part of the tectonic-like complex which is required for tissue-specific ciliogenesis and may regulate ciliary membrane composition. Involved in regulation of the BBSome complex integrity, specifically for presence of BBS2, BBS5 and BBS8/TTC8 in the complex, and in ciliary targeting of selected BBSome cargos. May play a role in controlling entry of the BBSome complex to cilia possibly implicating IQCB1/NPHP5. Activates ATF4-mediated transcription.</text>
</comment>
<comment type="subunit">
    <text evidence="2 3 6">Part of the tectonic-like complex (also named B9 complex) (By similarity). Interacts with ATF4 via its N-terminal region. Associates with the BBSome complex, interacting (via N-terminus) with BBS4. Interacts with IQCB1/NPHP5; IQCB1 and CEP290/NPHP6 are proposed to form a functional NPHP5-6 module localized to the centrosome. Interacts with NPHP4; the interaction likely requires additional interactors. Interacts with ZNF423, FAM161A, CEP162, CEP162, CEP131, TALPID3, CCDC13, CC2D2A, RPGRIP1. Can self-associate (homo- or heteromeric). Interacts with CCP110; required for suppressing cilia formation (By similarity). Interacts with RPGR (By similarity). Associates (via C-terminus) with microtubules; association to microtubule is reduced in response to cellular stress, such as ultraviolet light (UV) radiation or heat shock, in a process that requires p38 MAP kinase signaling (By similarity). Interacts with FAM161A (PubMed:22940612). Interacts with PCM1 (By similarity). Interacts with CCDC66 (By similarity). Interacts with ARMC9 and CSPP1 (By similarity).</text>
</comment>
<comment type="subcellular location">
    <subcellularLocation>
        <location evidence="2">Cytoplasm</location>
        <location evidence="2">Cytoskeleton</location>
        <location evidence="2">Microtubule organizing center</location>
        <location evidence="2">Centrosome</location>
    </subcellularLocation>
    <subcellularLocation>
        <location evidence="2">Cytoplasm</location>
        <location evidence="2">Cytoskeleton</location>
        <location evidence="2">Microtubule organizing center</location>
        <location evidence="2">Centrosome</location>
        <location evidence="2">Centriolar satellite</location>
    </subcellularLocation>
    <subcellularLocation>
        <location evidence="3">Nucleus</location>
    </subcellularLocation>
    <subcellularLocation>
        <location evidence="2">Cell projection</location>
        <location evidence="2">Cilium</location>
    </subcellularLocation>
    <subcellularLocation>
        <location evidence="3">Cytoplasm</location>
        <location evidence="3">Cytoskeleton</location>
        <location evidence="3">Cilium basal body</location>
    </subcellularLocation>
    <subcellularLocation>
        <location evidence="2">Cytoplasm</location>
        <location evidence="2">Cytoskeleton</location>
        <location evidence="2">Microtubule organizing center</location>
        <location evidence="2">Centrosome</location>
        <location evidence="2">Centriole</location>
    </subcellularLocation>
    <subcellularLocation>
        <location evidence="2">Cytoplasmic vesicle</location>
    </subcellularLocation>
    <text evidence="2 3">Displaced from centriolar satellites in response to cellular stress, such as ultraviolet light (UV) radiation or heat shock (By similarity). Found in the connecting cilium of photoreceptor cells, base of cilium in kidney intramedullary collecting duct cells (By similarity). Localizes at the transition zone, a region between the basal body and the ciliary axoneme. Localization at the ciliary transition zone as well as at centriolar satellites is BBsome-dependent (By similarity).</text>
</comment>
<comment type="alternative products">
    <event type="alternative splicing"/>
    <isoform>
        <id>Q9TU23-1</id>
        <name>1</name>
        <sequence type="displayed"/>
    </isoform>
    <isoform>
        <id>Q9TU23-2</id>
        <name>2</name>
        <sequence type="described" ref="VSP_021028 VSP_021029"/>
    </isoform>
</comment>
<comment type="PTM">
    <text evidence="1">Ubiquitinated. May undergo monoubiquitination; monoubiquitination is inhibited in response to cellular stress, such as ultraviolet light (UV) radiation or heat shock, but does not cause its displacement from centriolar satellites (By similarity).</text>
</comment>
<comment type="sequence caution" evidence="8">
    <conflict type="erroneous initiation">
        <sequence resource="EMBL-CDS" id="AAF00990"/>
    </conflict>
    <text>Truncated N-terminus.</text>
</comment>
<proteinExistence type="evidence at protein level"/>
<name>CE290_BOVIN</name>
<keyword id="KW-0010">Activator</keyword>
<keyword id="KW-0025">Alternative splicing</keyword>
<keyword id="KW-0966">Cell projection</keyword>
<keyword id="KW-0969">Cilium</keyword>
<keyword id="KW-0970">Cilium biogenesis/degradation</keyword>
<keyword id="KW-0175">Coiled coil</keyword>
<keyword id="KW-0963">Cytoplasm</keyword>
<keyword id="KW-0968">Cytoplasmic vesicle</keyword>
<keyword id="KW-0206">Cytoskeleton</keyword>
<keyword id="KW-0539">Nucleus</keyword>
<keyword id="KW-0653">Protein transport</keyword>
<keyword id="KW-1185">Reference proteome</keyword>
<keyword id="KW-0813">Transport</keyword>
<keyword id="KW-0832">Ubl conjugation</keyword>
<feature type="chain" id="PRO_0000089463" description="Centrosomal protein of 290 kDa">
    <location>
        <begin position="1" status="less than"/>
        <end position="1468"/>
    </location>
</feature>
<feature type="region of interest" description="Self-association (with itself or N-terminus)" evidence="2">
    <location>
        <begin position="1060"/>
        <end position="1468"/>
    </location>
</feature>
<feature type="region of interest" description="Disordered" evidence="5">
    <location>
        <begin position="1130"/>
        <end position="1152"/>
    </location>
</feature>
<feature type="coiled-coil region" evidence="4">
    <location>
        <begin position="1"/>
        <end position="25"/>
    </location>
</feature>
<feature type="coiled-coil region" evidence="4">
    <location>
        <begin position="52"/>
        <end position="121"/>
    </location>
</feature>
<feature type="coiled-coil region" evidence="4">
    <location>
        <begin position="172"/>
        <end position="292"/>
    </location>
</feature>
<feature type="coiled-coil region" evidence="4">
    <location>
        <begin position="318"/>
        <end position="528"/>
    </location>
</feature>
<feature type="coiled-coil region" evidence="4">
    <location>
        <begin position="559"/>
        <end position="592"/>
    </location>
</feature>
<feature type="coiled-coil region" evidence="4">
    <location>
        <begin position="627"/>
        <end position="688"/>
    </location>
</feature>
<feature type="coiled-coil region" evidence="4">
    <location>
        <begin position="736"/>
        <end position="1441"/>
    </location>
</feature>
<feature type="splice variant" id="VSP_021028" description="In isoform 2." evidence="7">
    <original>TSGIDSDDHYQREQELQRENLKLSSENIELKFQLEQANKDLPRLKNQVRDLKEMCEFLKKEKAEVERKLGRVRGSGRSGKTIPELEKTIGLMKKVVEKVQRENEQLKKASGILTSEKMANIEMENEKLKAELEKLKVHLGRQLSMHYESKAKGTEKIVAENERLRKELKKIEILKHVPEGDETEQGLQRELRVLRLANSQLEKEKEEL</original>
    <variation>NVLCDTTTLSPLAASVNKYRHNIFHKKNTLHRKQNNRITELRIKNKKEIDVSANLHHQVPRHNLQYYSNEEKHEAEDIVDPTELNKSESRTNNTSSLFRSTEGTLTDFNPNFENDPNSKVQKINQDCCENDEQKDKNREEKAKQDEKEKGHLTEEVSHSKHTDPAEASGEDRGWATGVAALNQCAEEGAQAHPETNAPGQPRNEAAQL</variation>
    <location>
        <begin position="1140"/>
        <end position="1347"/>
    </location>
</feature>
<feature type="splice variant" id="VSP_021029" description="In isoform 2." evidence="7">
    <location>
        <begin position="1348"/>
        <end position="1468"/>
    </location>
</feature>
<feature type="non-terminal residue">
    <location>
        <position position="1"/>
    </location>
</feature>
<evidence type="ECO:0000250" key="1"/>
<evidence type="ECO:0000250" key="2">
    <source>
        <dbReference type="UniProtKB" id="O15078"/>
    </source>
</evidence>
<evidence type="ECO:0000250" key="3">
    <source>
        <dbReference type="UniProtKB" id="Q6A078"/>
    </source>
</evidence>
<evidence type="ECO:0000255" key="4"/>
<evidence type="ECO:0000256" key="5">
    <source>
        <dbReference type="SAM" id="MobiDB-lite"/>
    </source>
</evidence>
<evidence type="ECO:0000269" key="6">
    <source>
    </source>
</evidence>
<evidence type="ECO:0000303" key="7">
    <source ref="2"/>
</evidence>
<evidence type="ECO:0000305" key="8"/>
<organism>
    <name type="scientific">Bos taurus</name>
    <name type="common">Bovine</name>
    <dbReference type="NCBI Taxonomy" id="9913"/>
    <lineage>
        <taxon>Eukaryota</taxon>
        <taxon>Metazoa</taxon>
        <taxon>Chordata</taxon>
        <taxon>Craniata</taxon>
        <taxon>Vertebrata</taxon>
        <taxon>Euteleostomi</taxon>
        <taxon>Mammalia</taxon>
        <taxon>Eutheria</taxon>
        <taxon>Laurasiatheria</taxon>
        <taxon>Artiodactyla</taxon>
        <taxon>Ruminantia</taxon>
        <taxon>Pecora</taxon>
        <taxon>Bovidae</taxon>
        <taxon>Bovinae</taxon>
        <taxon>Bos</taxon>
    </lineage>
</organism>
<dbReference type="EMBL" id="AF176816">
    <property type="protein sequence ID" value="AAF00990.1"/>
    <property type="status" value="ALT_INIT"/>
    <property type="molecule type" value="mRNA"/>
</dbReference>
<dbReference type="EMBL" id="BC120445">
    <property type="protein sequence ID" value="AAI20446.1"/>
    <property type="molecule type" value="mRNA"/>
</dbReference>
<dbReference type="RefSeq" id="NP_777147.1">
    <property type="nucleotide sequence ID" value="NM_174722.2"/>
</dbReference>
<dbReference type="SMR" id="Q9TU23"/>
<dbReference type="FunCoup" id="Q9TU23">
    <property type="interactions" value="2936"/>
</dbReference>
<dbReference type="IntAct" id="Q9TU23">
    <property type="interactions" value="1"/>
</dbReference>
<dbReference type="STRING" id="9913.ENSBTAP00000024961"/>
<dbReference type="PaxDb" id="9913-ENSBTAP00000005450"/>
<dbReference type="GeneID" id="282707"/>
<dbReference type="KEGG" id="bta:282707"/>
<dbReference type="CTD" id="80184"/>
<dbReference type="eggNOG" id="ENOG502QPTZ">
    <property type="taxonomic scope" value="Eukaryota"/>
</dbReference>
<dbReference type="InParanoid" id="Q9TU23"/>
<dbReference type="OrthoDB" id="6351660at2759"/>
<dbReference type="Proteomes" id="UP000009136">
    <property type="component" value="Unplaced"/>
</dbReference>
<dbReference type="GO" id="GO:0034451">
    <property type="term" value="C:centriolar satellite"/>
    <property type="evidence" value="ECO:0000250"/>
    <property type="project" value="UniProtKB"/>
</dbReference>
<dbReference type="GO" id="GO:0005814">
    <property type="term" value="C:centriole"/>
    <property type="evidence" value="ECO:0007669"/>
    <property type="project" value="UniProtKB-SubCell"/>
</dbReference>
<dbReference type="GO" id="GO:0005813">
    <property type="term" value="C:centrosome"/>
    <property type="evidence" value="ECO:0000250"/>
    <property type="project" value="UniProtKB"/>
</dbReference>
<dbReference type="GO" id="GO:0031410">
    <property type="term" value="C:cytoplasmic vesicle"/>
    <property type="evidence" value="ECO:0007669"/>
    <property type="project" value="UniProtKB-KW"/>
</dbReference>
<dbReference type="GO" id="GO:0005829">
    <property type="term" value="C:cytosol"/>
    <property type="evidence" value="ECO:0000250"/>
    <property type="project" value="UniProtKB"/>
</dbReference>
<dbReference type="GO" id="GO:0036038">
    <property type="term" value="C:MKS complex"/>
    <property type="evidence" value="ECO:0000250"/>
    <property type="project" value="UniProtKB"/>
</dbReference>
<dbReference type="GO" id="GO:0005634">
    <property type="term" value="C:nucleus"/>
    <property type="evidence" value="ECO:0000250"/>
    <property type="project" value="UniProtKB"/>
</dbReference>
<dbReference type="GO" id="GO:0032391">
    <property type="term" value="C:photoreceptor connecting cilium"/>
    <property type="evidence" value="ECO:0000250"/>
    <property type="project" value="UniProtKB"/>
</dbReference>
<dbReference type="GO" id="GO:0030030">
    <property type="term" value="P:cell projection organization"/>
    <property type="evidence" value="ECO:0007669"/>
    <property type="project" value="UniProtKB-KW"/>
</dbReference>
<dbReference type="GO" id="GO:0045893">
    <property type="term" value="P:positive regulation of DNA-templated transcription"/>
    <property type="evidence" value="ECO:0000250"/>
    <property type="project" value="UniProtKB"/>
</dbReference>
<dbReference type="GO" id="GO:0090316">
    <property type="term" value="P:positive regulation of intracellular protein transport"/>
    <property type="evidence" value="ECO:0000250"/>
    <property type="project" value="UniProtKB"/>
</dbReference>
<dbReference type="GO" id="GO:0015031">
    <property type="term" value="P:protein transport"/>
    <property type="evidence" value="ECO:0000250"/>
    <property type="project" value="UniProtKB"/>
</dbReference>
<dbReference type="InterPro" id="IPR032321">
    <property type="entry name" value="Cep209_CC5"/>
</dbReference>
<dbReference type="InterPro" id="IPR026201">
    <property type="entry name" value="Cep290"/>
</dbReference>
<dbReference type="PANTHER" id="PTHR18879">
    <property type="entry name" value="CENTROSOMAL PROTEIN OF 290 KDA"/>
    <property type="match status" value="1"/>
</dbReference>
<dbReference type="PANTHER" id="PTHR18879:SF20">
    <property type="entry name" value="CENTROSOMAL PROTEIN OF 290 KDA"/>
    <property type="match status" value="1"/>
</dbReference>
<dbReference type="Pfam" id="PF16574">
    <property type="entry name" value="CEP209_CC5"/>
    <property type="match status" value="1"/>
</dbReference>
<accession>Q9TU23</accession>
<accession>Q0P567</accession>
<reference key="1">
    <citation type="submission" date="1999-08" db="EMBL/GenBank/DDBJ databases">
        <authorList>
            <person name="Jovov B."/>
            <person name="Ripoll P.J."/>
            <person name="Benos D.J."/>
        </authorList>
    </citation>
    <scope>NUCLEOTIDE SEQUENCE [MRNA] (ISOFORM 1)</scope>
    <source>
        <tissue>Trachea</tissue>
    </source>
</reference>
<reference key="2">
    <citation type="submission" date="2006-08" db="EMBL/GenBank/DDBJ databases">
        <authorList>
            <consortium name="NIH - Mammalian Gene Collection (MGC) project"/>
        </authorList>
    </citation>
    <scope>NUCLEOTIDE SEQUENCE [LARGE SCALE MRNA] OF 685-1468 (ISOFORM 2)</scope>
    <source>
        <strain>Hereford</strain>
        <tissue>Basal ganglia</tissue>
    </source>
</reference>
<reference key="3">
    <citation type="journal article" date="2012" name="Hum. Mol. Genet.">
        <title>FAM161A, associated with retinitis pigmentosa, is a component of the cilia-basal body complex and interacts with proteins involved in ciliopathies.</title>
        <authorList>
            <person name="Di Gioia S.A."/>
            <person name="Letteboer S.J."/>
            <person name="Kostic C."/>
            <person name="Bandah-Rozenfeld D."/>
            <person name="Hetterschijt L."/>
            <person name="Sharon D."/>
            <person name="Arsenijevic Y."/>
            <person name="Roepman R."/>
            <person name="Rivolta C."/>
        </authorList>
    </citation>
    <scope>INTERACTION WITH FAM161A</scope>
</reference>
<protein>
    <recommendedName>
        <fullName>Centrosomal protein of 290 kDa</fullName>
        <shortName>Cep290</shortName>
    </recommendedName>
    <alternativeName>
        <fullName>Nephrocystin-6</fullName>
    </alternativeName>
</protein>
<sequence length="1468" mass="171787">ERQLRKENGKQKNELMAMEAEVGEKIGRLQRFKEMAVFKIAALQKVVDNSVSLSELELANRQYNELTAKYRDILQKDNMLVQRTNNLEHLECENVSLKEQMESINKELEITKEKLHTIEQAWEQETKLGNESNMDKAKKSVTNSEIVSISKKITMLEMKELNERQRAEHSQKMYEHVKTSLQQVEERNFELETKFAELTRINLEAQKVEQMLRDELADSVSKTVSDADRQHILELEKSEMELKVEVSKLKEISDIAKRQVEILNAQQQSREKEVESLRTQLLDYQAQSDEKALIAKLHQHVVSLQASEAAALGKVESVASKLQKVEAHTLRLEQKLDEKEQALFYARLEGRNRAKHLRQTIQSLRRQFSGALPLAQQEKFSKTMIQLQNDKLKIMEEMKNSQQEHRSLKNKTLEMELKLKGLEDLISTLKDARGAQKVISWHTKIEELRLQELKLNRELVKDKEEIKYLNNIISEYENTISSLEEEIVQQNKFHEERQMAWDQREVELERQLDVFDRQQSEILREAQKFEEATGSMPDPSLPIPNQLEIALRKIKENIRIILETQATCRSLEEKLREKESALRLAEENILSRDKVINELRLRLPATAEQEKLLAEFSRKEVEPKSHHTLKLAHQTIANMQARLNQKEEVLKKYQHLLEKAREEQREIVKKHEEELHTLHRKLELQADNSLSKFKETAWDLIKQSPTPVPTNKHFIRLAEMEQTVAEQDDSLSSLVIKLKQVSQDLERQKEITELKIKEFENMKLRLQENHADEVKKIKAEVEDLRCLLVQSQKESQSLKSELQTQKEANSRAPTTTMRNLVERLKSQLALKEKQQKALSRALLELRAEMTAAAEERIISMTSQKEANLNVQQIVDRHTKELKSQIEDLNENILKLKEALKTSKNRENTLTDNLNDLTNELQNKQKAYGKVLREKDAVDQENNELKRQIKRLTSGLQGKPLIDNKQSLIEELQKKIKKLESQLERKVDEAEMKPMKEKSAREEVIRWEEGKKWQTKIEGIRNKLKEKEGEVYILTKQLTTLKDLFAKADKEKLTLQRKLKTTGLTVDQVMAARVLESEKELEELKKRNLDLENDISYMRSHQALPRDSVIEDLHLQNKYLQEKLHALEKQLSKDAYSRPSTSGIDSDDHYQREQELQRENLKLSSENIELKFQLEQANKDLPRLKNQVRDLKEMCEFLKKEKAEVERKLGRVRGSGRSGKTIPELEKTIGLMKKVVEKVQRENEQLKKASGILTSEKMANIEMENEKLKAELEKLKVHLGRQLSMHYESKAKGTEKIVAENERLRKELKKIEILKHVPEGDETEQGLQRELRVLRLANSQLEKEKEELIHRIEISKDQNGPDSTISDPDHLMEKIKDLETQLRTSDMEKQHLKEEIQKLKKELENFDPSFFEEIEDLKYNYKEEVKKNILLEEKLKKLSEQFGVELTSPVAASEQFEDEQENPVNFPIY</sequence>